<comment type="function">
    <text evidence="1 2 5 6 9">Component of the adaptor protein complex 2 (AP-2) (PubMed:14745134, PubMed:15473838). Adaptor protein complexes function in protein transport via transport vesicles in different membrane traffic pathways (PubMed:14745134, PubMed:15473838). Adaptor protein complexes are vesicle coat components and appear to be involved in cargo selection and vesicle formation (PubMed:14745134, PubMed:15473838). AP-2 is involved in clathrin-dependent endocytosis in which cargo proteins are incorporated into vesicles surrounded by clathrin (clathrin-coated vesicles, CCVs) which are destined for fusion with the early endosome (PubMed:14745134, PubMed:15473838). The clathrin lattice serves as a mechanical scaffold but is itself unable to bind directly to membrane components (PubMed:14745134, PubMed:15473838). Clathrin-associated adaptor protein (AP) complexes which can bind directly to both the clathrin lattice and to the lipid and protein components of membranes are considered to be the major clathrin adaptors contributing the CCV formation (By similarity). AP-2 also serves as a cargo receptor to selectively sort the membrane proteins involved in receptor-mediated endocytosis (By similarity). AP-2 seems to play a role in the recycling of synaptic vesicle membranes from the presynaptic surface (By similarity). AP-2 recognizes Y-X-X-[FILMV] (Y-X-X-Phi) and [ED]-X-X-X-L-[LI] endocytosis signal motifs within the cytosolic tails of transmembrane cargo molecules (By similarity). AP-2 may also play a role in maintaining normal post-endocytic trafficking through the ARF6-regulated, non-clathrin pathway (By similarity). During long-term potentiation in hippocampal neurons, AP-2 is responsible for the endocytosis of ADAM10 (PubMed:23676497). The AP-2 mu subunit binds to transmembrane cargo proteins; it recognizes the Y-X-X-Phi motifs (By similarity). The surface region interacting with to the Y-X-X-Phi motif is inaccessible in cytosolic AP-2, but becomes accessible through a conformational change following phosphorylation of AP-2 mu subunit at Thr-156 in membrane-associated AP-2 (By similarity). The membrane-specific phosphorylation event appears to involve assembled clathrin which activates the AP-2 mu kinase AAK1 (By similarity). Plays a role in endocytosis of frizzled family members upon Wnt signaling (By similarity).</text>
</comment>
<comment type="subunit">
    <text evidence="1 2 4 8 9">Adaptor protein complex 2 (AP-2) is a heterotetramer composed of two large adaptins (alpha-type subunit AP2A1 or AP2A2 and beta-type subunit AP2B1), a medium adaptin (mu-type subunit AP2M1) and a small adaptin (sigma-type subunit AP2S1) (By similarity). Interacts with ATP6V1H and MEGF10 (By similarity). Interacts with EGFR and TTGN1 (By similarity). Interacts with F2R (By similarity). Interacts with PIP5K1C isoform 1; tyrosine phosphorylation of PIP5K1C weakens the interaction. Does not interact with PIP5K1C isoform 3 (PubMed:16707488). Interacts with KIAA0319; required for clathrin-mediated endocytosis of KIAA0319 (By similarity). Interacts with DVL2 (via DEP domain) (By similarity). Interacts with KCNQ1; mediates estrogen-induced internalization via clathrin-coated vesicles (By similarity). Interacts with P2RX4 (via internalization motif) (By similarity). Together with AP2A1 or AP2A2 and AP2B1, it interacts with ADAM10; this interaction facilitates ADAM10 endocytosis from the plasma membrane during long-term potentiation in hippocampal neurons (PubMed:23676497). Probably interacts with ACE2 (via endocytic sorting signal motif); the interaction is inhibited by ACE2 phosphorylation (By similarity). Interacts with RALBP1; the interaction is direct (PubMed:10910768). Interacts with TMEM106B (via N-terminus) (By similarity).</text>
</comment>
<comment type="subcellular location">
    <subcellularLocation>
        <location evidence="2">Cell membrane</location>
    </subcellularLocation>
    <subcellularLocation>
        <location evidence="2">Membrane</location>
        <location evidence="2">Coated pit</location>
        <topology>Peripheral membrane protein</topology>
        <orientation>Cytoplasmic side</orientation>
    </subcellularLocation>
    <text evidence="11">AP-2 appears to be excluded from internalizing CCVs and to disengage from sites of endocytosis seconds before internalization of the nascent CCV.</text>
</comment>
<comment type="tissue specificity">
    <text evidence="9">Expressed in the brain (at protein level) (PubMed:23676497). Detected in spleen.</text>
</comment>
<comment type="PTM">
    <text evidence="2">Phosphorylation at Thr-156 increases the affinity of the AP-2 complex for cargo membrane proteins during the initial stages of endocytosis.</text>
</comment>
<comment type="disruption phenotype">
    <text evidence="7">Embryonic lethal before day 3.5 postcoitus (E3.5).</text>
</comment>
<comment type="similarity">
    <text evidence="10">Belongs to the adaptor complexes medium subunit family.</text>
</comment>
<evidence type="ECO:0000250" key="1">
    <source>
        <dbReference type="UniProtKB" id="P84092"/>
    </source>
</evidence>
<evidence type="ECO:0000250" key="2">
    <source>
        <dbReference type="UniProtKB" id="Q96CW1"/>
    </source>
</evidence>
<evidence type="ECO:0000255" key="3">
    <source>
        <dbReference type="PROSITE-ProRule" id="PRU00404"/>
    </source>
</evidence>
<evidence type="ECO:0000269" key="4">
    <source>
    </source>
</evidence>
<evidence type="ECO:0000269" key="5">
    <source>
    </source>
</evidence>
<evidence type="ECO:0000269" key="6">
    <source>
    </source>
</evidence>
<evidence type="ECO:0000269" key="7">
    <source>
    </source>
</evidence>
<evidence type="ECO:0000269" key="8">
    <source>
    </source>
</evidence>
<evidence type="ECO:0000269" key="9">
    <source>
    </source>
</evidence>
<evidence type="ECO:0000305" key="10"/>
<evidence type="ECO:0000305" key="11">
    <source>
    </source>
</evidence>
<evidence type="ECO:0007744" key="12">
    <source>
    </source>
</evidence>
<evidence type="ECO:0007829" key="13">
    <source>
        <dbReference type="PDB" id="6OWO"/>
    </source>
</evidence>
<evidence type="ECO:0007829" key="14">
    <source>
        <dbReference type="PDB" id="8T1O"/>
    </source>
</evidence>
<organism>
    <name type="scientific">Mus musculus</name>
    <name type="common">Mouse</name>
    <dbReference type="NCBI Taxonomy" id="10090"/>
    <lineage>
        <taxon>Eukaryota</taxon>
        <taxon>Metazoa</taxon>
        <taxon>Chordata</taxon>
        <taxon>Craniata</taxon>
        <taxon>Vertebrata</taxon>
        <taxon>Euteleostomi</taxon>
        <taxon>Mammalia</taxon>
        <taxon>Eutheria</taxon>
        <taxon>Euarchontoglires</taxon>
        <taxon>Glires</taxon>
        <taxon>Rodentia</taxon>
        <taxon>Myomorpha</taxon>
        <taxon>Muroidea</taxon>
        <taxon>Muridae</taxon>
        <taxon>Murinae</taxon>
        <taxon>Mus</taxon>
        <taxon>Mus</taxon>
    </lineage>
</organism>
<accession>P84091</accession>
<accession>P20172</accession>
<accession>P53679</accession>
<sequence length="435" mass="49655">MIGGLFIYNHKGEVLISRVYRDDIGRNAVDAFRVNVIHARQQVRSPVTNIARTSFFHVKRSNIWLAAVTKQNVNAAMVFEFLYKMCDVMAAYFGKISEENIKNNFVLIYELLDEILDFGYPQNSETGALKTFITQQGIKSQHQTKEEQSQITSQVTGQIGWRREGIKYRRNELFLDVLESVNLLMSPQGQVLSAHVSGRVVMKSYLSGMPECKFGMNDKIVIEKQGKGTADETSKSGKQSIAIDDCTFHQCVRLSKFDSERSISFIPPDGEFELMRYRTTKDIILPFRVIPLVREVGRTKLEVKVVIKSNFKPSLLAQKIEVRIPTPLNTSGVQVICMKGKAKYKASENAIVWKIKRMAGMKESQISAEIELLPTNDKKKWARPPISMNFEVPFAPSGLKVRYLKVFEPKLNYSDHDVIKWVRYIGRSGIYETRC</sequence>
<feature type="chain" id="PRO_0000193775" description="AP-2 complex subunit mu">
    <location>
        <begin position="1"/>
        <end position="435"/>
    </location>
</feature>
<feature type="domain" description="MHD" evidence="3">
    <location>
        <begin position="170"/>
        <end position="434"/>
    </location>
</feature>
<feature type="binding site" evidence="1">
    <location>
        <position position="341"/>
    </location>
    <ligand>
        <name>a 1,2-diacyl-sn-glycero-3-phospho-(1D-myo-inositol-3,4,5-trisphosphate)</name>
        <dbReference type="ChEBI" id="CHEBI:57836"/>
    </ligand>
</feature>
<feature type="binding site" evidence="1">
    <location>
        <position position="345"/>
    </location>
    <ligand>
        <name>a 1,2-diacyl-sn-glycero-3-phospho-(1D-myo-inositol-3,4,5-trisphosphate)</name>
        <dbReference type="ChEBI" id="CHEBI:57836"/>
    </ligand>
</feature>
<feature type="binding site" evidence="1">
    <location>
        <position position="354"/>
    </location>
    <ligand>
        <name>a 1,2-diacyl-sn-glycero-3-phospho-(1D-myo-inositol-3,4,5-trisphosphate)</name>
        <dbReference type="ChEBI" id="CHEBI:57836"/>
    </ligand>
</feature>
<feature type="modified residue" description="Phosphoserine" evidence="2">
    <location>
        <position position="45"/>
    </location>
</feature>
<feature type="modified residue" description="Phosphothreonine" evidence="12">
    <location>
        <position position="156"/>
    </location>
</feature>
<feature type="strand" evidence="13">
    <location>
        <begin position="4"/>
        <end position="8"/>
    </location>
</feature>
<feature type="strand" evidence="13">
    <location>
        <begin position="10"/>
        <end position="12"/>
    </location>
</feature>
<feature type="strand" evidence="13">
    <location>
        <begin position="14"/>
        <end position="20"/>
    </location>
</feature>
<feature type="helix" evidence="13">
    <location>
        <begin position="28"/>
        <end position="35"/>
    </location>
</feature>
<feature type="turn" evidence="13">
    <location>
        <begin position="36"/>
        <end position="38"/>
    </location>
</feature>
<feature type="strand" evidence="13">
    <location>
        <begin position="46"/>
        <end position="50"/>
    </location>
</feature>
<feature type="strand" evidence="13">
    <location>
        <begin position="53"/>
        <end position="60"/>
    </location>
</feature>
<feature type="strand" evidence="13">
    <location>
        <begin position="63"/>
        <end position="71"/>
    </location>
</feature>
<feature type="helix" evidence="13">
    <location>
        <begin position="75"/>
        <end position="93"/>
    </location>
</feature>
<feature type="helix" evidence="13">
    <location>
        <begin position="98"/>
        <end position="101"/>
    </location>
</feature>
<feature type="helix" evidence="13">
    <location>
        <begin position="105"/>
        <end position="114"/>
    </location>
</feature>
<feature type="strand" evidence="13">
    <location>
        <begin position="115"/>
        <end position="117"/>
    </location>
</feature>
<feature type="turn" evidence="13">
    <location>
        <begin position="126"/>
        <end position="128"/>
    </location>
</feature>
<feature type="helix" evidence="13">
    <location>
        <begin position="129"/>
        <end position="131"/>
    </location>
</feature>
<feature type="helix" evidence="14">
    <location>
        <begin position="145"/>
        <end position="156"/>
    </location>
</feature>
<feature type="strand" evidence="13">
    <location>
        <begin position="160"/>
        <end position="162"/>
    </location>
</feature>
<feature type="strand" evidence="13">
    <location>
        <begin position="172"/>
        <end position="185"/>
    </location>
</feature>
<feature type="strand" evidence="13">
    <location>
        <begin position="191"/>
        <end position="205"/>
    </location>
</feature>
<feature type="strand" evidence="13">
    <location>
        <begin position="211"/>
        <end position="216"/>
    </location>
</feature>
<feature type="strand" evidence="13">
    <location>
        <begin position="245"/>
        <end position="248"/>
    </location>
</feature>
<feature type="strand" evidence="14">
    <location>
        <begin position="250"/>
        <end position="252"/>
    </location>
</feature>
<feature type="helix" evidence="14">
    <location>
        <begin position="254"/>
        <end position="260"/>
    </location>
</feature>
<feature type="strand" evidence="13">
    <location>
        <begin position="262"/>
        <end position="265"/>
    </location>
</feature>
<feature type="strand" evidence="13">
    <location>
        <begin position="269"/>
        <end position="279"/>
    </location>
</feature>
<feature type="strand" evidence="13">
    <location>
        <begin position="287"/>
        <end position="296"/>
    </location>
</feature>
<feature type="turn" evidence="13">
    <location>
        <begin position="297"/>
        <end position="299"/>
    </location>
</feature>
<feature type="strand" evidence="13">
    <location>
        <begin position="300"/>
        <end position="309"/>
    </location>
</feature>
<feature type="strand" evidence="13">
    <location>
        <begin position="315"/>
        <end position="325"/>
    </location>
</feature>
<feature type="strand" evidence="13">
    <location>
        <begin position="330"/>
        <end position="345"/>
    </location>
</feature>
<feature type="turn" evidence="13">
    <location>
        <begin position="346"/>
        <end position="349"/>
    </location>
</feature>
<feature type="strand" evidence="13">
    <location>
        <begin position="350"/>
        <end position="361"/>
    </location>
</feature>
<feature type="strand" evidence="13">
    <location>
        <begin position="363"/>
        <end position="372"/>
    </location>
</feature>
<feature type="strand" evidence="13">
    <location>
        <begin position="386"/>
        <end position="391"/>
    </location>
</feature>
<feature type="strand" evidence="13">
    <location>
        <begin position="401"/>
        <end position="407"/>
    </location>
</feature>
<feature type="strand" evidence="13">
    <location>
        <begin position="409"/>
        <end position="412"/>
    </location>
</feature>
<feature type="helix" evidence="13">
    <location>
        <begin position="415"/>
        <end position="417"/>
    </location>
</feature>
<feature type="strand" evidence="13">
    <location>
        <begin position="418"/>
        <end position="433"/>
    </location>
</feature>
<name>AP2M1_MOUSE</name>
<dbReference type="EMBL" id="U27106">
    <property type="protein sequence ID" value="AAC53158.1"/>
    <property type="molecule type" value="mRNA"/>
</dbReference>
<dbReference type="EMBL" id="AF001923">
    <property type="protein sequence ID" value="AAC53583.1"/>
    <property type="molecule type" value="Genomic_DNA"/>
</dbReference>
<dbReference type="EMBL" id="AF001913">
    <property type="protein sequence ID" value="AAC53583.1"/>
    <property type="status" value="JOINED"/>
    <property type="molecule type" value="Genomic_DNA"/>
</dbReference>
<dbReference type="EMBL" id="AF001914">
    <property type="protein sequence ID" value="AAC53583.1"/>
    <property type="status" value="JOINED"/>
    <property type="molecule type" value="Genomic_DNA"/>
</dbReference>
<dbReference type="EMBL" id="AF001915">
    <property type="protein sequence ID" value="AAC53583.1"/>
    <property type="status" value="JOINED"/>
    <property type="molecule type" value="Genomic_DNA"/>
</dbReference>
<dbReference type="EMBL" id="AF001916">
    <property type="protein sequence ID" value="AAC53583.1"/>
    <property type="status" value="JOINED"/>
    <property type="molecule type" value="Genomic_DNA"/>
</dbReference>
<dbReference type="EMBL" id="AF001917">
    <property type="protein sequence ID" value="AAC53583.1"/>
    <property type="status" value="JOINED"/>
    <property type="molecule type" value="Genomic_DNA"/>
</dbReference>
<dbReference type="EMBL" id="AF001918">
    <property type="protein sequence ID" value="AAC53583.1"/>
    <property type="status" value="JOINED"/>
    <property type="molecule type" value="Genomic_DNA"/>
</dbReference>
<dbReference type="EMBL" id="AF001919">
    <property type="protein sequence ID" value="AAC53583.1"/>
    <property type="status" value="JOINED"/>
    <property type="molecule type" value="Genomic_DNA"/>
</dbReference>
<dbReference type="EMBL" id="AF001920">
    <property type="protein sequence ID" value="AAC53583.1"/>
    <property type="status" value="JOINED"/>
    <property type="molecule type" value="Genomic_DNA"/>
</dbReference>
<dbReference type="EMBL" id="AF001921">
    <property type="protein sequence ID" value="AAC53583.1"/>
    <property type="status" value="JOINED"/>
    <property type="molecule type" value="Genomic_DNA"/>
</dbReference>
<dbReference type="EMBL" id="AF001922">
    <property type="protein sequence ID" value="AAC53583.1"/>
    <property type="status" value="JOINED"/>
    <property type="molecule type" value="Genomic_DNA"/>
</dbReference>
<dbReference type="EMBL" id="BC056352">
    <property type="protein sequence ID" value="AAH56352.1"/>
    <property type="molecule type" value="mRNA"/>
</dbReference>
<dbReference type="CCDS" id="CCDS28048.1"/>
<dbReference type="PIR" id="I49327">
    <property type="entry name" value="I49327"/>
</dbReference>
<dbReference type="PIR" id="JC6563">
    <property type="entry name" value="JC6563"/>
</dbReference>
<dbReference type="RefSeq" id="NP_033809.1">
    <property type="nucleotide sequence ID" value="NM_009679.3"/>
</dbReference>
<dbReference type="PDB" id="6OWO">
    <property type="method" value="EM"/>
    <property type="resolution" value="3.20 A"/>
    <property type="chains" value="M=1-435"/>
</dbReference>
<dbReference type="PDB" id="6OWT">
    <property type="method" value="EM"/>
    <property type="resolution" value="3.80 A"/>
    <property type="chains" value="M=1-141"/>
</dbReference>
<dbReference type="PDB" id="6OXL">
    <property type="method" value="EM"/>
    <property type="resolution" value="3.50 A"/>
    <property type="chains" value="M=1-435"/>
</dbReference>
<dbReference type="PDB" id="7RW8">
    <property type="method" value="EM"/>
    <property type="resolution" value="3.50 A"/>
    <property type="chains" value="M=1-435"/>
</dbReference>
<dbReference type="PDB" id="7RW9">
    <property type="method" value="EM"/>
    <property type="resolution" value="3.90 A"/>
    <property type="chains" value="M=1-435"/>
</dbReference>
<dbReference type="PDB" id="7RWA">
    <property type="method" value="EM"/>
    <property type="resolution" value="4.70 A"/>
    <property type="chains" value="M/m=1-435"/>
</dbReference>
<dbReference type="PDB" id="7RWB">
    <property type="method" value="EM"/>
    <property type="resolution" value="3.90 A"/>
    <property type="chains" value="M/m=1-435"/>
</dbReference>
<dbReference type="PDB" id="7RWC">
    <property type="method" value="EM"/>
    <property type="resolution" value="3.80 A"/>
    <property type="chains" value="M=1-435"/>
</dbReference>
<dbReference type="PDB" id="8T1O">
    <property type="method" value="EM"/>
    <property type="resolution" value="3.30 A"/>
    <property type="chains" value="M=1-435"/>
</dbReference>
<dbReference type="PDBsum" id="6OWO"/>
<dbReference type="PDBsum" id="6OWT"/>
<dbReference type="PDBsum" id="6OXL"/>
<dbReference type="PDBsum" id="7RW8"/>
<dbReference type="PDBsum" id="7RW9"/>
<dbReference type="PDBsum" id="7RWA"/>
<dbReference type="PDBsum" id="7RWB"/>
<dbReference type="PDBsum" id="7RWC"/>
<dbReference type="PDBsum" id="8T1O"/>
<dbReference type="EMDB" id="EMD-16803"/>
<dbReference type="EMDB" id="EMD-16804"/>
<dbReference type="EMDB" id="EMD-20215"/>
<dbReference type="EMDB" id="EMD-20220"/>
<dbReference type="EMDB" id="EMD-24710"/>
<dbReference type="EMDB" id="EMD-24711"/>
<dbReference type="EMDB" id="EMD-24712"/>
<dbReference type="EMDB" id="EMD-24713"/>
<dbReference type="EMDB" id="EMD-24714"/>
<dbReference type="EMDB" id="EMD-29977"/>
<dbReference type="EMDB" id="EMD-40034"/>
<dbReference type="EMDB" id="EMD-40035"/>
<dbReference type="EMDB" id="EMD-40973"/>
<dbReference type="SMR" id="P84091"/>
<dbReference type="BioGRID" id="198131">
    <property type="interactions" value="43"/>
</dbReference>
<dbReference type="ComplexPortal" id="CPX-5152">
    <property type="entry name" value="AP-2 Adaptor complex, alpha1 variant"/>
</dbReference>
<dbReference type="ComplexPortal" id="CPX-5153">
    <property type="entry name" value="AP-2 Adaptor complex, alpha2 variant"/>
</dbReference>
<dbReference type="FunCoup" id="P84091">
    <property type="interactions" value="2831"/>
</dbReference>
<dbReference type="IntAct" id="P84091">
    <property type="interactions" value="7"/>
</dbReference>
<dbReference type="STRING" id="10090.ENSMUSP00000007216"/>
<dbReference type="GlyGen" id="P84091">
    <property type="glycosylation" value="2 sites, 1 N-linked glycan (1 site), 1 O-linked glycan (1 site)"/>
</dbReference>
<dbReference type="iPTMnet" id="P84091"/>
<dbReference type="PhosphoSitePlus" id="P84091"/>
<dbReference type="SwissPalm" id="P84091"/>
<dbReference type="jPOST" id="P84091"/>
<dbReference type="PaxDb" id="10090-ENSMUSP00000007216"/>
<dbReference type="PeptideAtlas" id="P84091"/>
<dbReference type="ProteomicsDB" id="281786"/>
<dbReference type="Pumba" id="P84091"/>
<dbReference type="Antibodypedia" id="33793">
    <property type="antibodies" value="568 antibodies from 35 providers"/>
</dbReference>
<dbReference type="DNASU" id="11773"/>
<dbReference type="Ensembl" id="ENSMUST00000007216.9">
    <property type="protein sequence ID" value="ENSMUSP00000007216.9"/>
    <property type="gene ID" value="ENSMUSG00000022841.16"/>
</dbReference>
<dbReference type="GeneID" id="11773"/>
<dbReference type="KEGG" id="mmu:11773"/>
<dbReference type="UCSC" id="uc007ypy.2">
    <property type="organism name" value="mouse"/>
</dbReference>
<dbReference type="AGR" id="MGI:1298405"/>
<dbReference type="CTD" id="1173"/>
<dbReference type="MGI" id="MGI:1298405">
    <property type="gene designation" value="Ap2m1"/>
</dbReference>
<dbReference type="VEuPathDB" id="HostDB:ENSMUSG00000022841"/>
<dbReference type="eggNOG" id="KOG0938">
    <property type="taxonomic scope" value="Eukaryota"/>
</dbReference>
<dbReference type="GeneTree" id="ENSGT00940000159223"/>
<dbReference type="InParanoid" id="P84091"/>
<dbReference type="OMA" id="VWKIPRI"/>
<dbReference type="OrthoDB" id="10259133at2759"/>
<dbReference type="PhylomeDB" id="P84091"/>
<dbReference type="TreeFam" id="TF300722"/>
<dbReference type="Reactome" id="R-MMU-177504">
    <property type="pathway name" value="Retrograde neurotrophin signalling"/>
</dbReference>
<dbReference type="Reactome" id="R-MMU-190873">
    <property type="pathway name" value="Gap junction degradation"/>
</dbReference>
<dbReference type="Reactome" id="R-MMU-196025">
    <property type="pathway name" value="Formation of annular gap junctions"/>
</dbReference>
<dbReference type="Reactome" id="R-MMU-2132295">
    <property type="pathway name" value="MHC class II antigen presentation"/>
</dbReference>
<dbReference type="Reactome" id="R-MMU-416993">
    <property type="pathway name" value="Trafficking of GluR2-containing AMPA receptors"/>
</dbReference>
<dbReference type="Reactome" id="R-MMU-437239">
    <property type="pathway name" value="Recycling pathway of L1"/>
</dbReference>
<dbReference type="Reactome" id="R-MMU-5099900">
    <property type="pathway name" value="WNT5A-dependent internalization of FZD4"/>
</dbReference>
<dbReference type="Reactome" id="R-MMU-5140745">
    <property type="pathway name" value="WNT5A-dependent internalization of FZD2, FZD5 and ROR2"/>
</dbReference>
<dbReference type="Reactome" id="R-MMU-8856825">
    <property type="pathway name" value="Cargo recognition for clathrin-mediated endocytosis"/>
</dbReference>
<dbReference type="Reactome" id="R-MMU-8856828">
    <property type="pathway name" value="Clathrin-mediated endocytosis"/>
</dbReference>
<dbReference type="Reactome" id="R-MMU-8866427">
    <property type="pathway name" value="VLDLR internalisation and degradation"/>
</dbReference>
<dbReference type="Reactome" id="R-MMU-8964038">
    <property type="pathway name" value="LDL clearance"/>
</dbReference>
<dbReference type="BioGRID-ORCS" id="11773">
    <property type="hits" value="23 hits in 83 CRISPR screens"/>
</dbReference>
<dbReference type="CD-CODE" id="CE726F99">
    <property type="entry name" value="Postsynaptic density"/>
</dbReference>
<dbReference type="ChiTaRS" id="Ap2m1">
    <property type="organism name" value="mouse"/>
</dbReference>
<dbReference type="PRO" id="PR:P84091"/>
<dbReference type="Proteomes" id="UP000000589">
    <property type="component" value="Chromosome 16"/>
</dbReference>
<dbReference type="RNAct" id="P84091">
    <property type="molecule type" value="protein"/>
</dbReference>
<dbReference type="Bgee" id="ENSMUSG00000022841">
    <property type="expression patterns" value="Expressed in primary visual cortex and 127 other cell types or tissues"/>
</dbReference>
<dbReference type="ExpressionAtlas" id="P84091">
    <property type="expression patterns" value="baseline and differential"/>
</dbReference>
<dbReference type="GO" id="GO:0030122">
    <property type="term" value="C:AP-2 adaptor complex"/>
    <property type="evidence" value="ECO:0000314"/>
    <property type="project" value="UniProtKB"/>
</dbReference>
<dbReference type="GO" id="GO:0009898">
    <property type="term" value="C:cytoplasmic side of plasma membrane"/>
    <property type="evidence" value="ECO:0000303"/>
    <property type="project" value="ComplexPortal"/>
</dbReference>
<dbReference type="GO" id="GO:0098894">
    <property type="term" value="C:extrinsic component of presynaptic endocytic zone membrane"/>
    <property type="evidence" value="ECO:0007669"/>
    <property type="project" value="Ensembl"/>
</dbReference>
<dbReference type="GO" id="GO:0098978">
    <property type="term" value="C:glutamatergic synapse"/>
    <property type="evidence" value="ECO:0000314"/>
    <property type="project" value="SynGO"/>
</dbReference>
<dbReference type="GO" id="GO:0005739">
    <property type="term" value="C:mitochondrion"/>
    <property type="evidence" value="ECO:0007005"/>
    <property type="project" value="MGI"/>
</dbReference>
<dbReference type="GO" id="GO:0098794">
    <property type="term" value="C:postsynapse"/>
    <property type="evidence" value="ECO:0007669"/>
    <property type="project" value="GOC"/>
</dbReference>
<dbReference type="GO" id="GO:0030141">
    <property type="term" value="C:secretory granule"/>
    <property type="evidence" value="ECO:0000304"/>
    <property type="project" value="MGI"/>
</dbReference>
<dbReference type="GO" id="GO:0045202">
    <property type="term" value="C:synapse"/>
    <property type="evidence" value="ECO:0000314"/>
    <property type="project" value="SynGO"/>
</dbReference>
<dbReference type="GO" id="GO:0008021">
    <property type="term" value="C:synaptic vesicle"/>
    <property type="evidence" value="ECO:0007669"/>
    <property type="project" value="Ensembl"/>
</dbReference>
<dbReference type="GO" id="GO:0097718">
    <property type="term" value="F:disordered domain specific binding"/>
    <property type="evidence" value="ECO:0000314"/>
    <property type="project" value="CAFA"/>
</dbReference>
<dbReference type="GO" id="GO:0008289">
    <property type="term" value="F:lipid binding"/>
    <property type="evidence" value="ECO:0007669"/>
    <property type="project" value="UniProtKB-KW"/>
</dbReference>
<dbReference type="GO" id="GO:0050750">
    <property type="term" value="F:low-density lipoprotein particle receptor binding"/>
    <property type="evidence" value="ECO:0007669"/>
    <property type="project" value="Ensembl"/>
</dbReference>
<dbReference type="GO" id="GO:0005048">
    <property type="term" value="F:signal sequence binding"/>
    <property type="evidence" value="ECO:0007669"/>
    <property type="project" value="Ensembl"/>
</dbReference>
<dbReference type="GO" id="GO:0044325">
    <property type="term" value="F:transmembrane transporter binding"/>
    <property type="evidence" value="ECO:0007669"/>
    <property type="project" value="Ensembl"/>
</dbReference>
<dbReference type="GO" id="GO:0072583">
    <property type="term" value="P:clathrin-dependent endocytosis"/>
    <property type="evidence" value="ECO:0000314"/>
    <property type="project" value="UniProtKB"/>
</dbReference>
<dbReference type="GO" id="GO:0006886">
    <property type="term" value="P:intracellular protein transport"/>
    <property type="evidence" value="ECO:0000304"/>
    <property type="project" value="MGI"/>
</dbReference>
<dbReference type="GO" id="GO:1903077">
    <property type="term" value="P:negative regulation of protein localization to plasma membrane"/>
    <property type="evidence" value="ECO:0007669"/>
    <property type="project" value="Ensembl"/>
</dbReference>
<dbReference type="GO" id="GO:0002092">
    <property type="term" value="P:positive regulation of receptor internalization"/>
    <property type="evidence" value="ECO:0007669"/>
    <property type="project" value="Ensembl"/>
</dbReference>
<dbReference type="GO" id="GO:1900244">
    <property type="term" value="P:positive regulation of synaptic vesicle endocytosis"/>
    <property type="evidence" value="ECO:0007669"/>
    <property type="project" value="Ensembl"/>
</dbReference>
<dbReference type="GO" id="GO:0098884">
    <property type="term" value="P:postsynaptic neurotransmitter receptor internalization"/>
    <property type="evidence" value="ECO:0000314"/>
    <property type="project" value="SynGO"/>
</dbReference>
<dbReference type="GO" id="GO:0065003">
    <property type="term" value="P:protein-containing complex assembly"/>
    <property type="evidence" value="ECO:0007669"/>
    <property type="project" value="Ensembl"/>
</dbReference>
<dbReference type="GO" id="GO:0097494">
    <property type="term" value="P:regulation of vesicle size"/>
    <property type="evidence" value="ECO:0007669"/>
    <property type="project" value="Ensembl"/>
</dbReference>
<dbReference type="GO" id="GO:0048488">
    <property type="term" value="P:synaptic vesicle endocytosis"/>
    <property type="evidence" value="ECO:0007669"/>
    <property type="project" value="Ensembl"/>
</dbReference>
<dbReference type="GO" id="GO:0006900">
    <property type="term" value="P:vesicle budding from membrane"/>
    <property type="evidence" value="ECO:0007669"/>
    <property type="project" value="Ensembl"/>
</dbReference>
<dbReference type="GO" id="GO:0016192">
    <property type="term" value="P:vesicle-mediated transport"/>
    <property type="evidence" value="ECO:0000304"/>
    <property type="project" value="MGI"/>
</dbReference>
<dbReference type="CDD" id="cd09251">
    <property type="entry name" value="AP-2_Mu2_Cterm"/>
    <property type="match status" value="1"/>
</dbReference>
<dbReference type="CDD" id="cd14836">
    <property type="entry name" value="AP2_Mu_N"/>
    <property type="match status" value="1"/>
</dbReference>
<dbReference type="FunFam" id="2.60.40.1170:FF:000008">
    <property type="entry name" value="AP-2 complex subunit mu isoform 2"/>
    <property type="match status" value="1"/>
</dbReference>
<dbReference type="FunFam" id="3.30.450.60:FF:000002">
    <property type="entry name" value="AP-2 complex subunit mu, putative"/>
    <property type="match status" value="1"/>
</dbReference>
<dbReference type="Gene3D" id="3.30.450.60">
    <property type="match status" value="1"/>
</dbReference>
<dbReference type="Gene3D" id="2.60.40.1170">
    <property type="entry name" value="Mu homology domain, subdomain B"/>
    <property type="match status" value="2"/>
</dbReference>
<dbReference type="InterPro" id="IPR050431">
    <property type="entry name" value="Adaptor_comp_med_subunit"/>
</dbReference>
<dbReference type="InterPro" id="IPR036168">
    <property type="entry name" value="AP2_Mu_C_sf"/>
</dbReference>
<dbReference type="InterPro" id="IPR043532">
    <property type="entry name" value="AP2_Mu_N"/>
</dbReference>
<dbReference type="InterPro" id="IPR022775">
    <property type="entry name" value="AP_mu_sigma_su"/>
</dbReference>
<dbReference type="InterPro" id="IPR001392">
    <property type="entry name" value="Clathrin_mu"/>
</dbReference>
<dbReference type="InterPro" id="IPR018240">
    <property type="entry name" value="Clathrin_mu_CS"/>
</dbReference>
<dbReference type="InterPro" id="IPR011012">
    <property type="entry name" value="Longin-like_dom_sf"/>
</dbReference>
<dbReference type="InterPro" id="IPR028565">
    <property type="entry name" value="MHD"/>
</dbReference>
<dbReference type="InterPro" id="IPR043512">
    <property type="entry name" value="Mu2_C"/>
</dbReference>
<dbReference type="PANTHER" id="PTHR10529">
    <property type="entry name" value="AP COMPLEX SUBUNIT MU"/>
    <property type="match status" value="1"/>
</dbReference>
<dbReference type="Pfam" id="PF00928">
    <property type="entry name" value="Adap_comp_sub"/>
    <property type="match status" value="1"/>
</dbReference>
<dbReference type="Pfam" id="PF01217">
    <property type="entry name" value="Clat_adaptor_s"/>
    <property type="match status" value="1"/>
</dbReference>
<dbReference type="PIRSF" id="PIRSF005992">
    <property type="entry name" value="Clathrin_mu"/>
    <property type="match status" value="1"/>
</dbReference>
<dbReference type="PRINTS" id="PR00314">
    <property type="entry name" value="CLATHRINADPT"/>
</dbReference>
<dbReference type="SUPFAM" id="SSF49447">
    <property type="entry name" value="Second domain of Mu2 adaptin subunit (ap50) of ap2 adaptor"/>
    <property type="match status" value="1"/>
</dbReference>
<dbReference type="SUPFAM" id="SSF64356">
    <property type="entry name" value="SNARE-like"/>
    <property type="match status" value="1"/>
</dbReference>
<dbReference type="PROSITE" id="PS00990">
    <property type="entry name" value="CLAT_ADAPTOR_M_1"/>
    <property type="match status" value="1"/>
</dbReference>
<dbReference type="PROSITE" id="PS00991">
    <property type="entry name" value="CLAT_ADAPTOR_M_2"/>
    <property type="match status" value="1"/>
</dbReference>
<dbReference type="PROSITE" id="PS51072">
    <property type="entry name" value="MHD"/>
    <property type="match status" value="1"/>
</dbReference>
<reference key="1">
    <citation type="journal article" date="1995" name="Science">
        <title>Interaction of tyrosine-based sorting signals with clathrin-associated proteins.</title>
        <authorList>
            <person name="Ohno H."/>
            <person name="Stewart J."/>
            <person name="Fournier M.C."/>
            <person name="Bosshart H."/>
            <person name="Rhee I.R."/>
            <person name="Miyatake S."/>
            <person name="Saito T."/>
            <person name="Gallusser A."/>
            <person name="Kirchhausen T."/>
            <person name="Bonifacino J.S."/>
        </authorList>
    </citation>
    <scope>NUCLEOTIDE SEQUENCE [MRNA]</scope>
    <source>
        <strain>BALB/cJ</strain>
        <tissue>Spleen</tissue>
    </source>
</reference>
<reference key="2">
    <citation type="journal article" date="1998" name="Gene">
        <title>Cloning of the gene encoding the murine clathrin-associated adaptor medium chain mu 2: gene organization, alternative splicing and chromosomal assignment.</title>
        <authorList>
            <person name="Ohno H."/>
            <person name="Poy G."/>
            <person name="Bonifacino J.S."/>
        </authorList>
    </citation>
    <scope>NUCLEOTIDE SEQUENCE [GENOMIC DNA]</scope>
    <source>
        <strain>129</strain>
    </source>
</reference>
<reference key="3">
    <citation type="journal article" date="2004" name="Genome Res.">
        <title>The status, quality, and expansion of the NIH full-length cDNA project: the Mammalian Gene Collection (MGC).</title>
        <authorList>
            <consortium name="The MGC Project Team"/>
        </authorList>
    </citation>
    <scope>NUCLEOTIDE SEQUENCE [LARGE SCALE MRNA]</scope>
    <source>
        <strain>C57BL/6J</strain>
        <tissue>Brain</tissue>
    </source>
</reference>
<reference key="4">
    <citation type="submission" date="2007-04" db="UniProtKB">
        <authorList>
            <person name="Lubec G."/>
            <person name="Kang S.U."/>
        </authorList>
    </citation>
    <scope>PROTEIN SEQUENCE OF 61-70; 131-139 AND 282-288</scope>
    <scope>IDENTIFICATION BY MASS SPECTROMETRY</scope>
    <source>
        <strain>C57BL/6J</strain>
        <tissue>Brain</tissue>
    </source>
</reference>
<reference key="5">
    <citation type="journal article" date="2000" name="J. Cell Sci.">
        <title>RLIP76, an effector of the GTPase Ral, interacts with the AP2 complex: involvement of the Ral pathway in receptor endocytosis.</title>
        <authorList>
            <person name="Jullien-Flores V."/>
            <person name="Mahe Y."/>
            <person name="Mirey G."/>
            <person name="Leprince C."/>
            <person name="Meunier-Bisceuil B."/>
            <person name="Sorkin A."/>
            <person name="Camonis J.H."/>
        </authorList>
    </citation>
    <scope>INTERACTION WITH RALBP1</scope>
</reference>
<reference key="6">
    <citation type="journal article" date="2003" name="Cell Struct. Funct.">
        <title>Adaptor protein complexes as the key regulators of protein sorting in the post-Golgi network.</title>
        <authorList>
            <person name="Nakatsu F."/>
            <person name="Ohno H."/>
        </authorList>
    </citation>
    <scope>FUNCTION OF THE AP-2 COMPLEX IN CLATHRIN-MEDIATED ENDOCYTOSIS</scope>
</reference>
<reference key="7">
    <citation type="journal article" date="2003" name="J. Biol. Chem.">
        <title>The AP-2 complex is excluded from the dynamic population of plasma membrane-associated clathrin.</title>
        <authorList>
            <person name="Rappoport J.Z."/>
            <person name="Taha B.W."/>
            <person name="Lemeer S."/>
            <person name="Benmerah A."/>
            <person name="Simon S.M."/>
        </authorList>
    </citation>
    <scope>SUBCELLULAR LOCATION OF THE AP-2 COMPLEX</scope>
</reference>
<reference key="8">
    <citation type="journal article" date="2004" name="Annu. Rev. Cell Dev. Biol.">
        <title>Adaptors for clathrin coats: structure and function.</title>
        <authorList>
            <person name="Owen D.J."/>
            <person name="Collins B.M."/>
            <person name="Evans P.R."/>
        </authorList>
    </citation>
    <scope>FUNCTION OF THE AP-2 COMPLEX IN CLATHRIN-MEDIATED ENDOCYTOSIS</scope>
</reference>
<reference key="9">
    <citation type="journal article" date="2005" name="Mol. Cell. Biol.">
        <title>Clathrin adaptor AP-2 is essential for early embryonal development.</title>
        <authorList>
            <person name="Mitsunari T."/>
            <person name="Nakatsu F."/>
            <person name="Shioda N."/>
            <person name="Love P.E."/>
            <person name="Grinberg A."/>
            <person name="Bonifacino J.S."/>
            <person name="Ohno H."/>
        </authorList>
    </citation>
    <scope>DISRUPTION PHENOTYPE</scope>
</reference>
<reference key="10">
    <citation type="journal article" date="2006" name="J. Biol. Chem.">
        <title>Type Igamma661 phosphatidylinositol phosphate kinase directly interacts with AP2 and regulates endocytosis.</title>
        <authorList>
            <person name="Bairstow S.F."/>
            <person name="Ling K."/>
            <person name="Su X."/>
            <person name="Firestone A.J."/>
            <person name="Carbonara C."/>
            <person name="Anderson R.A."/>
        </authorList>
    </citation>
    <scope>INTERACTION WITH PIP5K1C</scope>
</reference>
<reference key="11">
    <citation type="journal article" date="2010" name="Cell">
        <title>A tissue-specific atlas of mouse protein phosphorylation and expression.</title>
        <authorList>
            <person name="Huttlin E.L."/>
            <person name="Jedrychowski M.P."/>
            <person name="Elias J.E."/>
            <person name="Goswami T."/>
            <person name="Rad R."/>
            <person name="Beausoleil S.A."/>
            <person name="Villen J."/>
            <person name="Haas W."/>
            <person name="Sowa M.E."/>
            <person name="Gygi S.P."/>
        </authorList>
    </citation>
    <scope>PHOSPHORYLATION [LARGE SCALE ANALYSIS] AT THR-156</scope>
    <scope>IDENTIFICATION BY MASS SPECTROMETRY [LARGE SCALE ANALYSIS]</scope>
    <source>
        <tissue>Brain</tissue>
        <tissue>Brown adipose tissue</tissue>
        <tissue>Heart</tissue>
        <tissue>Kidney</tissue>
        <tissue>Liver</tissue>
        <tissue>Lung</tissue>
        <tissue>Pancreas</tissue>
        <tissue>Spleen</tissue>
        <tissue>Testis</tissue>
    </source>
</reference>
<reference key="12">
    <citation type="journal article" date="2013" name="J. Clin. Invest.">
        <title>Endocytosis of synaptic ADAM10 in neuronal plasticity and Alzheimer's disease.</title>
        <authorList>
            <person name="Marcello E."/>
            <person name="Saraceno C."/>
            <person name="Musardo S."/>
            <person name="Vara H."/>
            <person name="de la Fuente A.G."/>
            <person name="Pelucchi S."/>
            <person name="Di Marino D."/>
            <person name="Borroni B."/>
            <person name="Tramontano A."/>
            <person name="Perez-Otano I."/>
            <person name="Padovani A."/>
            <person name="Giustetto M."/>
            <person name="Gardoni F."/>
            <person name="Di Luca M."/>
        </authorList>
    </citation>
    <scope>FUNCTION</scope>
    <scope>INTERACTION WITH ADAM10</scope>
    <scope>TISSUE SPECIFICITY</scope>
</reference>
<proteinExistence type="evidence at protein level"/>
<gene>
    <name type="primary">Ap2m1</name>
    <name type="synonym">Clapm1</name>
</gene>
<keyword id="KW-0002">3D-structure</keyword>
<keyword id="KW-1003">Cell membrane</keyword>
<keyword id="KW-0168">Coated pit</keyword>
<keyword id="KW-0903">Direct protein sequencing</keyword>
<keyword id="KW-0254">Endocytosis</keyword>
<keyword id="KW-0446">Lipid-binding</keyword>
<keyword id="KW-0472">Membrane</keyword>
<keyword id="KW-0597">Phosphoprotein</keyword>
<keyword id="KW-0653">Protein transport</keyword>
<keyword id="KW-1185">Reference proteome</keyword>
<keyword id="KW-0813">Transport</keyword>
<protein>
    <recommendedName>
        <fullName>AP-2 complex subunit mu</fullName>
    </recommendedName>
    <alternativeName>
        <fullName>AP-2 mu chain</fullName>
    </alternativeName>
    <alternativeName>
        <fullName>Adaptor protein complex AP-2 subunit mu</fullName>
    </alternativeName>
    <alternativeName>
        <fullName>Adaptor-related protein complex 2 subunit mu</fullName>
    </alternativeName>
    <alternativeName>
        <fullName>Clathrin assembly protein complex 2 mu medium chain</fullName>
    </alternativeName>
    <alternativeName>
        <fullName>Clathrin coat assembly protein AP50</fullName>
    </alternativeName>
    <alternativeName>
        <fullName>Clathrin coat-associated protein AP50</fullName>
    </alternativeName>
    <alternativeName>
        <fullName>Mu2-adaptin</fullName>
    </alternativeName>
    <alternativeName>
        <fullName>Plasma membrane adaptor AP-2 50 kDa protein</fullName>
    </alternativeName>
</protein>